<feature type="chain" id="PRO_0000174782" description="Co-chaperonin GroES">
    <location>
        <begin position="1"/>
        <end position="94"/>
    </location>
</feature>
<feature type="sequence conflict" description="In Ref. 1; AAK28537." evidence="2" ref="1">
    <original>L</original>
    <variation>P</variation>
    <location>
        <position position="48"/>
    </location>
</feature>
<sequence>MLKPLGDRVVIEVLEAEEKTASGIVLPDSAKEKPQSGKIVAVGSGRVLDNGTKEPLEVAEGDTVIFAKYSGTEVTYEGTDYLILRESDILAITK</sequence>
<gene>
    <name evidence="1" type="primary">groES</name>
    <name evidence="1" type="synonym">groS</name>
    <name type="ordered locus">lmo2069</name>
</gene>
<comment type="function">
    <text evidence="1">Together with the chaperonin GroEL, plays an essential role in assisting protein folding. The GroEL-GroES system forms a nano-cage that allows encapsulation of the non-native substrate proteins and provides a physical environment optimized to promote and accelerate protein folding. GroES binds to the apical surface of the GroEL ring, thereby capping the opening of the GroEL channel.</text>
</comment>
<comment type="subunit">
    <text evidence="1">Heptamer of 7 subunits arranged in a ring. Interacts with the chaperonin GroEL.</text>
</comment>
<comment type="subcellular location">
    <subcellularLocation>
        <location evidence="1">Cytoplasm</location>
    </subcellularLocation>
</comment>
<comment type="similarity">
    <text evidence="1 2">Belongs to the GroES chaperonin family.</text>
</comment>
<organism>
    <name type="scientific">Listeria monocytogenes serovar 1/2a (strain ATCC BAA-679 / EGD-e)</name>
    <dbReference type="NCBI Taxonomy" id="169963"/>
    <lineage>
        <taxon>Bacteria</taxon>
        <taxon>Bacillati</taxon>
        <taxon>Bacillota</taxon>
        <taxon>Bacilli</taxon>
        <taxon>Bacillales</taxon>
        <taxon>Listeriaceae</taxon>
        <taxon>Listeria</taxon>
    </lineage>
</organism>
<reference key="1">
    <citation type="journal article" date="2001" name="Infect. Immun.">
        <title>Characterization of the groESL operon in Listeria monocytogenes: utilization of two reporter systems (gfp and hly) for evaluating in vivo expression.</title>
        <authorList>
            <person name="Gahan C.G."/>
            <person name="O'Mahony J."/>
            <person name="Hill C."/>
        </authorList>
    </citation>
    <scope>NUCLEOTIDE SEQUENCE [GENOMIC DNA]</scope>
    <source>
        <strain>LO28 / Serovar 1/2c</strain>
    </source>
</reference>
<reference key="2">
    <citation type="journal article" date="2001" name="Science">
        <title>Comparative genomics of Listeria species.</title>
        <authorList>
            <person name="Glaser P."/>
            <person name="Frangeul L."/>
            <person name="Buchrieser C."/>
            <person name="Rusniok C."/>
            <person name="Amend A."/>
            <person name="Baquero F."/>
            <person name="Berche P."/>
            <person name="Bloecker H."/>
            <person name="Brandt P."/>
            <person name="Chakraborty T."/>
            <person name="Charbit A."/>
            <person name="Chetouani F."/>
            <person name="Couve E."/>
            <person name="de Daruvar A."/>
            <person name="Dehoux P."/>
            <person name="Domann E."/>
            <person name="Dominguez-Bernal G."/>
            <person name="Duchaud E."/>
            <person name="Durant L."/>
            <person name="Dussurget O."/>
            <person name="Entian K.-D."/>
            <person name="Fsihi H."/>
            <person name="Garcia-del Portillo F."/>
            <person name="Garrido P."/>
            <person name="Gautier L."/>
            <person name="Goebel W."/>
            <person name="Gomez-Lopez N."/>
            <person name="Hain T."/>
            <person name="Hauf J."/>
            <person name="Jackson D."/>
            <person name="Jones L.-M."/>
            <person name="Kaerst U."/>
            <person name="Kreft J."/>
            <person name="Kuhn M."/>
            <person name="Kunst F."/>
            <person name="Kurapkat G."/>
            <person name="Madueno E."/>
            <person name="Maitournam A."/>
            <person name="Mata Vicente J."/>
            <person name="Ng E."/>
            <person name="Nedjari H."/>
            <person name="Nordsiek G."/>
            <person name="Novella S."/>
            <person name="de Pablos B."/>
            <person name="Perez-Diaz J.-C."/>
            <person name="Purcell R."/>
            <person name="Remmel B."/>
            <person name="Rose M."/>
            <person name="Schlueter T."/>
            <person name="Simoes N."/>
            <person name="Tierrez A."/>
            <person name="Vazquez-Boland J.-A."/>
            <person name="Voss H."/>
            <person name="Wehland J."/>
            <person name="Cossart P."/>
        </authorList>
    </citation>
    <scope>NUCLEOTIDE SEQUENCE [LARGE SCALE GENOMIC DNA]</scope>
    <source>
        <strain>ATCC BAA-679 / EGD-e</strain>
    </source>
</reference>
<dbReference type="EMBL" id="AF335323">
    <property type="protein sequence ID" value="AAK28537.1"/>
    <property type="molecule type" value="Genomic_DNA"/>
</dbReference>
<dbReference type="EMBL" id="AL591982">
    <property type="protein sequence ID" value="CAD00147.1"/>
    <property type="molecule type" value="Genomic_DNA"/>
</dbReference>
<dbReference type="PIR" id="AE1333">
    <property type="entry name" value="AE1333"/>
</dbReference>
<dbReference type="RefSeq" id="NP_465593.1">
    <property type="nucleotide sequence ID" value="NC_003210.1"/>
</dbReference>
<dbReference type="RefSeq" id="WP_003726504.1">
    <property type="nucleotide sequence ID" value="NZ_CP149495.1"/>
</dbReference>
<dbReference type="SMR" id="Q9AGE7"/>
<dbReference type="STRING" id="169963.gene:17594754"/>
<dbReference type="PaxDb" id="169963-lmo2069"/>
<dbReference type="EnsemblBacteria" id="CAD00147">
    <property type="protein sequence ID" value="CAD00147"/>
    <property type="gene ID" value="CAD00147"/>
</dbReference>
<dbReference type="GeneID" id="93235513"/>
<dbReference type="GeneID" id="985586"/>
<dbReference type="KEGG" id="lmo:lmo2069"/>
<dbReference type="PATRIC" id="fig|169963.11.peg.2117"/>
<dbReference type="eggNOG" id="COG0234">
    <property type="taxonomic scope" value="Bacteria"/>
</dbReference>
<dbReference type="HOGENOM" id="CLU_132825_2_0_9"/>
<dbReference type="OrthoDB" id="9806791at2"/>
<dbReference type="PhylomeDB" id="Q9AGE7"/>
<dbReference type="BioCyc" id="LMON169963:LMO2069-MONOMER"/>
<dbReference type="Proteomes" id="UP000000817">
    <property type="component" value="Chromosome"/>
</dbReference>
<dbReference type="GO" id="GO:0005737">
    <property type="term" value="C:cytoplasm"/>
    <property type="evidence" value="ECO:0007669"/>
    <property type="project" value="UniProtKB-SubCell"/>
</dbReference>
<dbReference type="GO" id="GO:0005524">
    <property type="term" value="F:ATP binding"/>
    <property type="evidence" value="ECO:0007669"/>
    <property type="project" value="InterPro"/>
</dbReference>
<dbReference type="GO" id="GO:0046872">
    <property type="term" value="F:metal ion binding"/>
    <property type="evidence" value="ECO:0000318"/>
    <property type="project" value="GO_Central"/>
</dbReference>
<dbReference type="GO" id="GO:0044183">
    <property type="term" value="F:protein folding chaperone"/>
    <property type="evidence" value="ECO:0007669"/>
    <property type="project" value="InterPro"/>
</dbReference>
<dbReference type="GO" id="GO:0051087">
    <property type="term" value="F:protein-folding chaperone binding"/>
    <property type="evidence" value="ECO:0000318"/>
    <property type="project" value="GO_Central"/>
</dbReference>
<dbReference type="GO" id="GO:0051082">
    <property type="term" value="F:unfolded protein binding"/>
    <property type="evidence" value="ECO:0000318"/>
    <property type="project" value="GO_Central"/>
</dbReference>
<dbReference type="GO" id="GO:0051085">
    <property type="term" value="P:chaperone cofactor-dependent protein refolding"/>
    <property type="evidence" value="ECO:0000318"/>
    <property type="project" value="GO_Central"/>
</dbReference>
<dbReference type="CDD" id="cd00320">
    <property type="entry name" value="cpn10"/>
    <property type="match status" value="1"/>
</dbReference>
<dbReference type="FunFam" id="2.30.33.40:FF:000001">
    <property type="entry name" value="10 kDa chaperonin"/>
    <property type="match status" value="1"/>
</dbReference>
<dbReference type="Gene3D" id="2.30.33.40">
    <property type="entry name" value="GroES chaperonin"/>
    <property type="match status" value="1"/>
</dbReference>
<dbReference type="HAMAP" id="MF_00580">
    <property type="entry name" value="CH10"/>
    <property type="match status" value="1"/>
</dbReference>
<dbReference type="InterPro" id="IPR020818">
    <property type="entry name" value="Chaperonin_GroES"/>
</dbReference>
<dbReference type="InterPro" id="IPR037124">
    <property type="entry name" value="Chaperonin_GroES_sf"/>
</dbReference>
<dbReference type="InterPro" id="IPR018369">
    <property type="entry name" value="Chaprnonin_Cpn10_CS"/>
</dbReference>
<dbReference type="InterPro" id="IPR011032">
    <property type="entry name" value="GroES-like_sf"/>
</dbReference>
<dbReference type="NCBIfam" id="NF001530">
    <property type="entry name" value="PRK00364.1-6"/>
    <property type="match status" value="1"/>
</dbReference>
<dbReference type="NCBIfam" id="NF001531">
    <property type="entry name" value="PRK00364.2-2"/>
    <property type="match status" value="1"/>
</dbReference>
<dbReference type="NCBIfam" id="NF001533">
    <property type="entry name" value="PRK00364.2-4"/>
    <property type="match status" value="1"/>
</dbReference>
<dbReference type="NCBIfam" id="NF001534">
    <property type="entry name" value="PRK00364.2-5"/>
    <property type="match status" value="1"/>
</dbReference>
<dbReference type="PANTHER" id="PTHR10772">
    <property type="entry name" value="10 KDA HEAT SHOCK PROTEIN"/>
    <property type="match status" value="1"/>
</dbReference>
<dbReference type="PANTHER" id="PTHR10772:SF58">
    <property type="entry name" value="CO-CHAPERONIN GROES"/>
    <property type="match status" value="1"/>
</dbReference>
<dbReference type="Pfam" id="PF00166">
    <property type="entry name" value="Cpn10"/>
    <property type="match status" value="1"/>
</dbReference>
<dbReference type="PRINTS" id="PR00297">
    <property type="entry name" value="CHAPERONIN10"/>
</dbReference>
<dbReference type="SMART" id="SM00883">
    <property type="entry name" value="Cpn10"/>
    <property type="match status" value="1"/>
</dbReference>
<dbReference type="SUPFAM" id="SSF50129">
    <property type="entry name" value="GroES-like"/>
    <property type="match status" value="1"/>
</dbReference>
<dbReference type="PROSITE" id="PS00681">
    <property type="entry name" value="CHAPERONINS_CPN10"/>
    <property type="match status" value="1"/>
</dbReference>
<protein>
    <recommendedName>
        <fullName evidence="1">Co-chaperonin GroES</fullName>
    </recommendedName>
    <alternativeName>
        <fullName evidence="1">10 kDa chaperonin</fullName>
    </alternativeName>
    <alternativeName>
        <fullName evidence="1">Chaperonin-10</fullName>
        <shortName evidence="1">Cpn10</shortName>
    </alternativeName>
</protein>
<proteinExistence type="inferred from homology"/>
<evidence type="ECO:0000255" key="1">
    <source>
        <dbReference type="HAMAP-Rule" id="MF_00580"/>
    </source>
</evidence>
<evidence type="ECO:0000305" key="2"/>
<keyword id="KW-0143">Chaperone</keyword>
<keyword id="KW-0963">Cytoplasm</keyword>
<keyword id="KW-1185">Reference proteome</keyword>
<accession>Q9AGE7</accession>
<accession>Q8Y5J2</accession>
<name>CH10_LISMO</name>